<protein>
    <recommendedName>
        <fullName evidence="1">tRNA uridine 5-carboxymethylaminomethyl modification enzyme MnmG</fullName>
    </recommendedName>
    <alternativeName>
        <fullName evidence="1">Glucose-inhibited division protein A</fullName>
    </alternativeName>
</protein>
<proteinExistence type="inferred from homology"/>
<reference key="1">
    <citation type="journal article" date="2001" name="Science">
        <title>Mechanisms of evolution in Rickettsia conorii and R. prowazekii.</title>
        <authorList>
            <person name="Ogata H."/>
            <person name="Audic S."/>
            <person name="Renesto-Audiffren P."/>
            <person name="Fournier P.-E."/>
            <person name="Barbe V."/>
            <person name="Samson D."/>
            <person name="Roux V."/>
            <person name="Cossart P."/>
            <person name="Weissenbach J."/>
            <person name="Claverie J.-M."/>
            <person name="Raoult D."/>
        </authorList>
    </citation>
    <scope>NUCLEOTIDE SEQUENCE [LARGE SCALE GENOMIC DNA]</scope>
    <source>
        <strain>ATCC VR-613 / Malish 7</strain>
    </source>
</reference>
<gene>
    <name evidence="1" type="primary">mnmG</name>
    <name evidence="1" type="synonym">gidA</name>
    <name type="ordered locus">RC0084</name>
</gene>
<dbReference type="EMBL" id="AE006914">
    <property type="protein sequence ID" value="AAL02622.1"/>
    <property type="molecule type" value="Genomic_DNA"/>
</dbReference>
<dbReference type="PIR" id="D97710">
    <property type="entry name" value="D97710"/>
</dbReference>
<dbReference type="RefSeq" id="WP_010976768.1">
    <property type="nucleotide sequence ID" value="NC_003103.1"/>
</dbReference>
<dbReference type="SMR" id="Q92JI3"/>
<dbReference type="GeneID" id="928530"/>
<dbReference type="KEGG" id="rco:RC0084"/>
<dbReference type="PATRIC" id="fig|272944.4.peg.101"/>
<dbReference type="HOGENOM" id="CLU_007831_2_2_5"/>
<dbReference type="Proteomes" id="UP000000816">
    <property type="component" value="Chromosome"/>
</dbReference>
<dbReference type="GO" id="GO:0005829">
    <property type="term" value="C:cytosol"/>
    <property type="evidence" value="ECO:0007669"/>
    <property type="project" value="TreeGrafter"/>
</dbReference>
<dbReference type="GO" id="GO:0050660">
    <property type="term" value="F:flavin adenine dinucleotide binding"/>
    <property type="evidence" value="ECO:0007669"/>
    <property type="project" value="UniProtKB-UniRule"/>
</dbReference>
<dbReference type="GO" id="GO:0030488">
    <property type="term" value="P:tRNA methylation"/>
    <property type="evidence" value="ECO:0007669"/>
    <property type="project" value="TreeGrafter"/>
</dbReference>
<dbReference type="GO" id="GO:0002098">
    <property type="term" value="P:tRNA wobble uridine modification"/>
    <property type="evidence" value="ECO:0007669"/>
    <property type="project" value="InterPro"/>
</dbReference>
<dbReference type="FunFam" id="3.50.50.60:FF:000082">
    <property type="entry name" value="protein MTO1 homolog, mitochondrial isoform X1"/>
    <property type="match status" value="1"/>
</dbReference>
<dbReference type="FunFam" id="1.10.150.570:FF:000001">
    <property type="entry name" value="tRNA uridine 5-carboxymethylaminomethyl modification enzyme MnmG"/>
    <property type="match status" value="1"/>
</dbReference>
<dbReference type="FunFam" id="3.50.50.60:FF:000002">
    <property type="entry name" value="tRNA uridine 5-carboxymethylaminomethyl modification enzyme MnmG"/>
    <property type="match status" value="1"/>
</dbReference>
<dbReference type="Gene3D" id="3.50.50.60">
    <property type="entry name" value="FAD/NAD(P)-binding domain"/>
    <property type="match status" value="2"/>
</dbReference>
<dbReference type="Gene3D" id="1.10.150.570">
    <property type="entry name" value="GidA associated domain, C-terminal subdomain"/>
    <property type="match status" value="1"/>
</dbReference>
<dbReference type="HAMAP" id="MF_00129">
    <property type="entry name" value="MnmG_GidA"/>
    <property type="match status" value="1"/>
</dbReference>
<dbReference type="InterPro" id="IPR036188">
    <property type="entry name" value="FAD/NAD-bd_sf"/>
</dbReference>
<dbReference type="InterPro" id="IPR049312">
    <property type="entry name" value="GIDA_C_N"/>
</dbReference>
<dbReference type="InterPro" id="IPR004416">
    <property type="entry name" value="MnmG"/>
</dbReference>
<dbReference type="InterPro" id="IPR002218">
    <property type="entry name" value="MnmG-rel"/>
</dbReference>
<dbReference type="InterPro" id="IPR020595">
    <property type="entry name" value="MnmG-rel_CS"/>
</dbReference>
<dbReference type="InterPro" id="IPR026904">
    <property type="entry name" value="MnmG_C"/>
</dbReference>
<dbReference type="InterPro" id="IPR047001">
    <property type="entry name" value="MnmG_C_subdom"/>
</dbReference>
<dbReference type="InterPro" id="IPR044920">
    <property type="entry name" value="MnmG_C_subdom_sf"/>
</dbReference>
<dbReference type="InterPro" id="IPR040131">
    <property type="entry name" value="MnmG_N"/>
</dbReference>
<dbReference type="NCBIfam" id="TIGR00136">
    <property type="entry name" value="mnmG_gidA"/>
    <property type="match status" value="1"/>
</dbReference>
<dbReference type="PANTHER" id="PTHR11806">
    <property type="entry name" value="GLUCOSE INHIBITED DIVISION PROTEIN A"/>
    <property type="match status" value="1"/>
</dbReference>
<dbReference type="PANTHER" id="PTHR11806:SF0">
    <property type="entry name" value="PROTEIN MTO1 HOMOLOG, MITOCHONDRIAL"/>
    <property type="match status" value="1"/>
</dbReference>
<dbReference type="Pfam" id="PF01134">
    <property type="entry name" value="GIDA"/>
    <property type="match status" value="1"/>
</dbReference>
<dbReference type="Pfam" id="PF21680">
    <property type="entry name" value="GIDA_C_1st"/>
    <property type="match status" value="1"/>
</dbReference>
<dbReference type="Pfam" id="PF13932">
    <property type="entry name" value="SAM_GIDA_C"/>
    <property type="match status" value="1"/>
</dbReference>
<dbReference type="PRINTS" id="PR00411">
    <property type="entry name" value="PNDRDTASEI"/>
</dbReference>
<dbReference type="SMART" id="SM01228">
    <property type="entry name" value="GIDA_assoc_3"/>
    <property type="match status" value="1"/>
</dbReference>
<dbReference type="SUPFAM" id="SSF51905">
    <property type="entry name" value="FAD/NAD(P)-binding domain"/>
    <property type="match status" value="1"/>
</dbReference>
<dbReference type="PROSITE" id="PS01280">
    <property type="entry name" value="GIDA_1"/>
    <property type="match status" value="1"/>
</dbReference>
<dbReference type="PROSITE" id="PS01281">
    <property type="entry name" value="GIDA_2"/>
    <property type="match status" value="1"/>
</dbReference>
<accession>Q92JI3</accession>
<sequence length="622" mass="68801">MLKYDVIVIGGGHAGVEAAAASARLGVPTLLITLKPENLGEMSCNPAIGGIAKGTLVKEIDALDGLMGYVIDQAGIHYKMLNETRGPAVWGPRAQADRKLYKKAMYQILTNYPNLDILYGKVEDIEIKSSKIEAVILNNGSKILCQKIILTTGTFLSGLIHIGQKKIPAGRVDEEPSYGLSNTLKQIGFKLARLKTGTPPRIDGRTIDYSKTILQPGDKIPRPFSELTNIVNVSQINCFITKTTSETHDIIRENLDKSAMYSGQIEGIGPRYCPSIEDKIVRFSTKSEHRIFLEPEGLDDYTIYPNGISTSLPEDVQHKLIKTIPGLENVKVLRPGYAIEYDYVDPREISVTLETKKIAGLYLAGQINGTTGYEEAAGQGIIAGINAALAVKDQAPFMLTRANSYIGVMIDDLTTFGTIEPYRMFTSRSEYRLSLRADNSDLRLTELGMNIGVVSEKRKKIFTKKCEDIEKIKSLLNTLSLSTSKLAKMGIQVAQDGTYKTVLDLFKIPNFNVEQAIKIFPMLKETQNNNILQLLYIEAKYASYLTRQHADINLFQSEEAQFIPKNIDYFKIPSISLEIQEKLSSHKPTTIGVARRIPGITPAAITAIIIYLKTKYSDGSST</sequence>
<evidence type="ECO:0000255" key="1">
    <source>
        <dbReference type="HAMAP-Rule" id="MF_00129"/>
    </source>
</evidence>
<feature type="chain" id="PRO_0000117164" description="tRNA uridine 5-carboxymethylaminomethyl modification enzyme MnmG">
    <location>
        <begin position="1"/>
        <end position="622"/>
    </location>
</feature>
<feature type="binding site" evidence="1">
    <location>
        <begin position="10"/>
        <end position="15"/>
    </location>
    <ligand>
        <name>FAD</name>
        <dbReference type="ChEBI" id="CHEBI:57692"/>
    </ligand>
</feature>
<feature type="binding site" evidence="1">
    <location>
        <position position="122"/>
    </location>
    <ligand>
        <name>FAD</name>
        <dbReference type="ChEBI" id="CHEBI:57692"/>
    </ligand>
</feature>
<feature type="binding site" evidence="1">
    <location>
        <position position="177"/>
    </location>
    <ligand>
        <name>FAD</name>
        <dbReference type="ChEBI" id="CHEBI:57692"/>
    </ligand>
</feature>
<feature type="binding site" evidence="1">
    <location>
        <begin position="269"/>
        <end position="283"/>
    </location>
    <ligand>
        <name>NAD(+)</name>
        <dbReference type="ChEBI" id="CHEBI:57540"/>
    </ligand>
</feature>
<feature type="binding site" evidence="1">
    <location>
        <position position="366"/>
    </location>
    <ligand>
        <name>FAD</name>
        <dbReference type="ChEBI" id="CHEBI:57692"/>
    </ligand>
</feature>
<name>MNMG_RICCN</name>
<organism>
    <name type="scientific">Rickettsia conorii (strain ATCC VR-613 / Malish 7)</name>
    <dbReference type="NCBI Taxonomy" id="272944"/>
    <lineage>
        <taxon>Bacteria</taxon>
        <taxon>Pseudomonadati</taxon>
        <taxon>Pseudomonadota</taxon>
        <taxon>Alphaproteobacteria</taxon>
        <taxon>Rickettsiales</taxon>
        <taxon>Rickettsiaceae</taxon>
        <taxon>Rickettsieae</taxon>
        <taxon>Rickettsia</taxon>
        <taxon>spotted fever group</taxon>
    </lineage>
</organism>
<comment type="function">
    <text evidence="1">NAD-binding protein involved in the addition of a carboxymethylaminomethyl (cmnm) group at the wobble position (U34) of certain tRNAs, forming tRNA-cmnm(5)s(2)U34.</text>
</comment>
<comment type="cofactor">
    <cofactor evidence="1">
        <name>FAD</name>
        <dbReference type="ChEBI" id="CHEBI:57692"/>
    </cofactor>
</comment>
<comment type="subunit">
    <text evidence="1">Homodimer. Heterotetramer of two MnmE and two MnmG subunits.</text>
</comment>
<comment type="subcellular location">
    <subcellularLocation>
        <location evidence="1">Cytoplasm</location>
    </subcellularLocation>
</comment>
<comment type="similarity">
    <text evidence="1">Belongs to the MnmG family.</text>
</comment>
<keyword id="KW-0963">Cytoplasm</keyword>
<keyword id="KW-0274">FAD</keyword>
<keyword id="KW-0285">Flavoprotein</keyword>
<keyword id="KW-0520">NAD</keyword>
<keyword id="KW-0819">tRNA processing</keyword>